<dbReference type="EMBL" id="EF102882">
    <property type="protein sequence ID" value="ABO31286.1"/>
    <property type="molecule type" value="Genomic_DNA"/>
</dbReference>
<dbReference type="SMR" id="A7KAI1"/>
<dbReference type="GO" id="GO:0005789">
    <property type="term" value="C:endoplasmic reticulum membrane"/>
    <property type="evidence" value="ECO:0007669"/>
    <property type="project" value="UniProtKB-SubCell"/>
</dbReference>
<dbReference type="GO" id="GO:0061908">
    <property type="term" value="C:phagophore"/>
    <property type="evidence" value="ECO:0007669"/>
    <property type="project" value="TreeGrafter"/>
</dbReference>
<dbReference type="GO" id="GO:0034045">
    <property type="term" value="C:phagophore assembly site membrane"/>
    <property type="evidence" value="ECO:0007669"/>
    <property type="project" value="UniProtKB-SubCell"/>
</dbReference>
<dbReference type="GO" id="GO:0032266">
    <property type="term" value="F:phosphatidylinositol-3-phosphate binding"/>
    <property type="evidence" value="ECO:0007669"/>
    <property type="project" value="TreeGrafter"/>
</dbReference>
<dbReference type="GO" id="GO:0043495">
    <property type="term" value="F:protein-membrane adaptor activity"/>
    <property type="evidence" value="ECO:0007669"/>
    <property type="project" value="TreeGrafter"/>
</dbReference>
<dbReference type="GO" id="GO:0000045">
    <property type="term" value="P:autophagosome assembly"/>
    <property type="evidence" value="ECO:0007669"/>
    <property type="project" value="TreeGrafter"/>
</dbReference>
<dbReference type="GO" id="GO:0000422">
    <property type="term" value="P:autophagy of mitochondrion"/>
    <property type="evidence" value="ECO:0007669"/>
    <property type="project" value="TreeGrafter"/>
</dbReference>
<dbReference type="GO" id="GO:0061723">
    <property type="term" value="P:glycophagy"/>
    <property type="evidence" value="ECO:0007669"/>
    <property type="project" value="TreeGrafter"/>
</dbReference>
<dbReference type="GO" id="GO:0006869">
    <property type="term" value="P:lipid transport"/>
    <property type="evidence" value="ECO:0007669"/>
    <property type="project" value="UniProtKB-KW"/>
</dbReference>
<dbReference type="GO" id="GO:0034727">
    <property type="term" value="P:piecemeal microautophagy of the nucleus"/>
    <property type="evidence" value="ECO:0007669"/>
    <property type="project" value="TreeGrafter"/>
</dbReference>
<dbReference type="GO" id="GO:0015031">
    <property type="term" value="P:protein transport"/>
    <property type="evidence" value="ECO:0007669"/>
    <property type="project" value="UniProtKB-KW"/>
</dbReference>
<dbReference type="GO" id="GO:0061709">
    <property type="term" value="P:reticulophagy"/>
    <property type="evidence" value="ECO:0007669"/>
    <property type="project" value="TreeGrafter"/>
</dbReference>
<dbReference type="InterPro" id="IPR026849">
    <property type="entry name" value="ATG2"/>
</dbReference>
<dbReference type="PANTHER" id="PTHR13190">
    <property type="entry name" value="AUTOPHAGY-RELATED 2, ISOFORM A"/>
    <property type="match status" value="1"/>
</dbReference>
<dbReference type="PANTHER" id="PTHR13190:SF1">
    <property type="entry name" value="AUTOPHAGY-RELATED 2, ISOFORM A"/>
    <property type="match status" value="1"/>
</dbReference>
<dbReference type="Pfam" id="PF13329">
    <property type="entry name" value="ATG2_CAD"/>
    <property type="match status" value="1"/>
</dbReference>
<evidence type="ECO:0000250" key="1">
    <source>
        <dbReference type="UniProtKB" id="O94649"/>
    </source>
</evidence>
<evidence type="ECO:0000250" key="2">
    <source>
        <dbReference type="UniProtKB" id="P53855"/>
    </source>
</evidence>
<evidence type="ECO:0000256" key="3">
    <source>
        <dbReference type="SAM" id="MobiDB-lite"/>
    </source>
</evidence>
<evidence type="ECO:0000269" key="4">
    <source>
    </source>
</evidence>
<evidence type="ECO:0000305" key="5"/>
<feature type="chain" id="PRO_0000317811" description="Autophagy-related protein 2">
    <location>
        <begin position="1"/>
        <end position="1765"/>
    </location>
</feature>
<feature type="region of interest" description="Disordered" evidence="3">
    <location>
        <begin position="218"/>
        <end position="243"/>
    </location>
</feature>
<feature type="region of interest" description="Disordered" evidence="3">
    <location>
        <begin position="1188"/>
        <end position="1224"/>
    </location>
</feature>
<feature type="region of interest" description="Disordered" evidence="3">
    <location>
        <begin position="1746"/>
        <end position="1765"/>
    </location>
</feature>
<feature type="compositionally biased region" description="Acidic residues" evidence="3">
    <location>
        <begin position="226"/>
        <end position="243"/>
    </location>
</feature>
<feature type="compositionally biased region" description="Polar residues" evidence="3">
    <location>
        <begin position="1188"/>
        <end position="1206"/>
    </location>
</feature>
<feature type="compositionally biased region" description="Low complexity" evidence="3">
    <location>
        <begin position="1207"/>
        <end position="1221"/>
    </location>
</feature>
<feature type="compositionally biased region" description="Basic and acidic residues" evidence="3">
    <location>
        <begin position="1747"/>
        <end position="1765"/>
    </location>
</feature>
<protein>
    <recommendedName>
        <fullName>Autophagy-related protein 2</fullName>
    </recommendedName>
</protein>
<organism>
    <name type="scientific">Pichia angusta</name>
    <name type="common">Yeast</name>
    <name type="synonym">Hansenula polymorpha</name>
    <dbReference type="NCBI Taxonomy" id="870730"/>
    <lineage>
        <taxon>Eukaryota</taxon>
        <taxon>Fungi</taxon>
        <taxon>Dikarya</taxon>
        <taxon>Ascomycota</taxon>
        <taxon>Saccharomycotina</taxon>
        <taxon>Pichiomycetes</taxon>
        <taxon>Pichiales</taxon>
        <taxon>Pichiaceae</taxon>
        <taxon>Ogataea</taxon>
    </lineage>
</organism>
<proteinExistence type="inferred from homology"/>
<reference key="1">
    <citation type="journal article" date="2007" name="Autophagy">
        <title>ATG genes involved in non-selective autophagy are conserved from yeast to man, but the selective Cvt and pexophagy pathways also require organism-specific genes.</title>
        <authorList>
            <person name="Meijer W.H."/>
            <person name="van der Klei I.J."/>
            <person name="Veenhuis M."/>
            <person name="Kiel J.A.K.W."/>
        </authorList>
    </citation>
    <scope>NUCLEOTIDE SEQUENCE [GENOMIC DNA]</scope>
    <scope>FUNCTION</scope>
    <source>
        <strain>ATCC 34438 / CBS 4732 / DSM 70277 / JCM 3621 / NBRC 1476 / NRRL Y-5445</strain>
    </source>
</reference>
<accession>A7KAI1</accession>
<name>ATG2_PICAN</name>
<comment type="function">
    <text evidence="2 4">Lipid transfer protein required for autophagosome completion and peroxisome degradation and peroxisome degradation (PubMed:17204848). Tethers the edge of the isolation membrane (IM) to the endoplasmic reticulum (ER) and mediates direct lipid transfer from ER to IM for IM expansion. ATG2 binds to the ER exit site (ERES), which is the membrane source for autophagosome formation, using basic residues in its N-terminal region (NR) and to the expanding edge of the IM through its C-terminal region. The latter binding is assisted by an ATG18-PtdIns3P interaction. ATG2 then extracts phospholipids from the membrane source using its NR and transfers them to ATG9 to the IM through its predicted beta-sheet-rich structure for membrane expansion.</text>
</comment>
<comment type="catalytic activity">
    <reaction evidence="1">
        <text>a 1,2-diacyl-sn-glycero-3-phosphocholine(in) = a 1,2-diacyl-sn-glycero-3-phosphocholine(out)</text>
        <dbReference type="Rhea" id="RHEA:38571"/>
        <dbReference type="ChEBI" id="CHEBI:57643"/>
    </reaction>
</comment>
<comment type="catalytic activity">
    <reaction evidence="1">
        <text>a 1,2-diacyl-sn-glycero-3-phospho-L-serine(in) = a 1,2-diacyl-sn-glycero-3-phospho-L-serine(out)</text>
        <dbReference type="Rhea" id="RHEA:38663"/>
        <dbReference type="ChEBI" id="CHEBI:57262"/>
    </reaction>
</comment>
<comment type="catalytic activity">
    <reaction evidence="1">
        <text>a 1,2-diacyl-sn-glycero-3-phosphoethanolamine(in) = a 1,2-diacyl-sn-glycero-3-phosphoethanolamine(out)</text>
        <dbReference type="Rhea" id="RHEA:38895"/>
        <dbReference type="ChEBI" id="CHEBI:64612"/>
    </reaction>
</comment>
<comment type="subcellular location">
    <subcellularLocation>
        <location evidence="2">Preautophagosomal structure membrane</location>
        <topology evidence="2">Peripheral membrane protein</topology>
    </subcellularLocation>
    <subcellularLocation>
        <location evidence="2">Endoplasmic reticulum membrane</location>
        <topology evidence="2">Peripheral membrane protein</topology>
    </subcellularLocation>
</comment>
<comment type="similarity">
    <text evidence="5">Belongs to the ATG2 family.</text>
</comment>
<keyword id="KW-0072">Autophagy</keyword>
<keyword id="KW-0256">Endoplasmic reticulum</keyword>
<keyword id="KW-0445">Lipid transport</keyword>
<keyword id="KW-0472">Membrane</keyword>
<keyword id="KW-0653">Protein transport</keyword>
<keyword id="KW-0813">Transport</keyword>
<sequence length="1765" mass="195780">MAPQWMPQNIQKRLLKYILQQLSLFSEIDLPNLDVSLGTSSKVNLRNLELDIEKFSIPGMYMRSGSIETLSLSLTISDGVNVDCAGVNITLTPSLTPGKPNSTDQFSLAKSTADLANSVMFEDNVVEDEDIKETPSVDSNPLPPEIKDYRMSNMMAKAADMALSRLQLTVRDVKITMILETSHMEVCIEKVTLLSKEGTRYITVEGMTLNAIKPEVYSGEGVDNVDNSEERDETESEESEDYDDELMQTSFMADNKDDIHNSLMESMMFATQTSESVYMSATSNVFSSTTPRASTYENHQPSAVCVAYVSKCSVQFDGLQNIENMQVNLGRIKIAASPIPECLSSVIQSIRNLVRLSAMSTNETAGNTEKEPESDNTTLLNTLKIDEICVSFESALLKDGNFALDNTTCLSLSDIRFEQKNASFSFGSIAKIRLSRNDSKTELFCFDDSRAPNVADLGLEILNNDVSRITLICPKSLNIVVDEHLLTLAARYYSLMEPVIETLISVISTQTPYSYSNTHTSRFALHDTANNQKSNEFHAQTSSIHVKLQLNDFCITITISPITYDSQEGRFDTSSILFEYNDPTLGEQYASNQFLMISNLETSSAGVNKIRSFDSSSLQEIWLKTKIKTIVEKATLKLNFDVLIKIISSFGKLADLVRKSMVTSLPVARQKKVRMGSSLFLNATKMLKNCVEIKHCTIIFSHICPHFGDLKFSLKDIFVNFLQDGTLHSYVMSVLIQRICDSVHESLLEAADPRNKGYPMMFAKFKDNVGVHFKNCSFNYYGEWITLLESRERPREETNQSSSASSATSKKRQVNFTFADVSIGLVPVNLKSKIEVVIKKGIADLLIGTDGRSKLQSSFSSLTLLLIDDVANILSDKESKSLRHWINANNNHAIWTLNAILKSKGFVPVSYISSLFLNSTFESERHLEKRMTQAFSGQKIFASIDTKIHADALAVDLCADSCQCLIQTLKDLKQPVQFSFNEKYKPMTDEVDVFKDVDETTFSASVSVDVDNLEQTEIPENEKLEIVEDFFDKNLNSDSAEQSAIRSGSLSNSGTKSGAMSNIIFDDNHFGHSGEEFTTKVIPMAIGVSISNVTIKLYDGYDWKETQTTIKNAIRRVEDKAAKIGDNMNEVTEGSTSEHVRSVSNDSTELDTEAVNELLYESIHVGLLAGQDPQSFYDNINKSISNCGGSENVSEHNNLSPGSSSPASVNTANSTRSAASSHNIELGKVSSRRVRLKRSIYHKVLVELENLDLSNLTMVNSEPHPTKNSIVFSEDESKDDSELVSRMDLSVGSFKVVDNVPTSSWNMFVGYLREAGDKELGSSMLHAVIDTVRPVSSLAASELVISVSVLPLRLYVDQDTLDFLTRFGEFKDDRFTLPALDEEEVFIEKFQVNSVRIKLDYKPKKVDYAGIRSGHTNEFMNFFILDESEMVLKKLVLYGIPGFARLHKMLNDLWMPDIKRNQLGGVLSGLAPVKSIVKIGSGFKELVAVPLKEYEKDGRVIRGLQKGALSFAKITGGELLKFGVKLAAGTQTILESTEEALGGDGSAVRLPGYKKNTKSRRRTSPSEVIYATSRERSLFGHNTMSGAVFHRNSFDSYGEEEEFLEGAPALDGAGTQDAEQHQKSRFLVPAVFKSTAELPDVLESDSDLDDYYDESDNEGQKIVSLYSNQPENLNEGLQTAYTSLGRNLDTAREAIVSASTRAARSGSAQTAAREFAKATPIMVIRPIIGTTEAISRTLQGGINILDPEEKRRSEEKYKNTKKEAG</sequence>
<gene>
    <name type="primary">ATG2</name>
</gene>